<protein>
    <recommendedName>
        <fullName evidence="9">WRKY transcription factor WRKY76</fullName>
        <shortName evidence="9">OsWRKY76</shortName>
    </recommendedName>
</protein>
<reference key="1">
    <citation type="journal article" date="2005" name="Nature">
        <title>The map-based sequence of the rice genome.</title>
        <authorList>
            <consortium name="International rice genome sequencing project (IRGSP)"/>
        </authorList>
    </citation>
    <scope>NUCLEOTIDE SEQUENCE [LARGE SCALE GENOMIC DNA]</scope>
    <source>
        <strain>cv. Nipponbare</strain>
    </source>
</reference>
<reference key="2">
    <citation type="journal article" date="2008" name="Nucleic Acids Res.">
        <title>The rice annotation project database (RAP-DB): 2008 update.</title>
        <authorList>
            <consortium name="The rice annotation project (RAP)"/>
        </authorList>
    </citation>
    <scope>GENOME REANNOTATION</scope>
    <source>
        <strain>cv. Nipponbare</strain>
    </source>
</reference>
<reference key="3">
    <citation type="journal article" date="2013" name="Rice">
        <title>Improvement of the Oryza sativa Nipponbare reference genome using next generation sequence and optical map data.</title>
        <authorList>
            <person name="Kawahara Y."/>
            <person name="de la Bastide M."/>
            <person name="Hamilton J.P."/>
            <person name="Kanamori H."/>
            <person name="McCombie W.R."/>
            <person name="Ouyang S."/>
            <person name="Schwartz D.C."/>
            <person name="Tanaka T."/>
            <person name="Wu J."/>
            <person name="Zhou S."/>
            <person name="Childs K.L."/>
            <person name="Davidson R.M."/>
            <person name="Lin H."/>
            <person name="Quesada-Ocampo L."/>
            <person name="Vaillancourt B."/>
            <person name="Sakai H."/>
            <person name="Lee S.S."/>
            <person name="Kim J."/>
            <person name="Numa H."/>
            <person name="Itoh T."/>
            <person name="Buell C.R."/>
            <person name="Matsumoto T."/>
        </authorList>
    </citation>
    <scope>GENOME REANNOTATION</scope>
    <source>
        <strain>cv. Nipponbare</strain>
    </source>
</reference>
<reference key="4">
    <citation type="journal article" date="2005" name="PLoS Biol.">
        <title>The genomes of Oryza sativa: a history of duplications.</title>
        <authorList>
            <person name="Yu J."/>
            <person name="Wang J."/>
            <person name="Lin W."/>
            <person name="Li S."/>
            <person name="Li H."/>
            <person name="Zhou J."/>
            <person name="Ni P."/>
            <person name="Dong W."/>
            <person name="Hu S."/>
            <person name="Zeng C."/>
            <person name="Zhang J."/>
            <person name="Zhang Y."/>
            <person name="Li R."/>
            <person name="Xu Z."/>
            <person name="Li S."/>
            <person name="Li X."/>
            <person name="Zheng H."/>
            <person name="Cong L."/>
            <person name="Lin L."/>
            <person name="Yin J."/>
            <person name="Geng J."/>
            <person name="Li G."/>
            <person name="Shi J."/>
            <person name="Liu J."/>
            <person name="Lv H."/>
            <person name="Li J."/>
            <person name="Wang J."/>
            <person name="Deng Y."/>
            <person name="Ran L."/>
            <person name="Shi X."/>
            <person name="Wang X."/>
            <person name="Wu Q."/>
            <person name="Li C."/>
            <person name="Ren X."/>
            <person name="Wang J."/>
            <person name="Wang X."/>
            <person name="Li D."/>
            <person name="Liu D."/>
            <person name="Zhang X."/>
            <person name="Ji Z."/>
            <person name="Zhao W."/>
            <person name="Sun Y."/>
            <person name="Zhang Z."/>
            <person name="Bao J."/>
            <person name="Han Y."/>
            <person name="Dong L."/>
            <person name="Ji J."/>
            <person name="Chen P."/>
            <person name="Wu S."/>
            <person name="Liu J."/>
            <person name="Xiao Y."/>
            <person name="Bu D."/>
            <person name="Tan J."/>
            <person name="Yang L."/>
            <person name="Ye C."/>
            <person name="Zhang J."/>
            <person name="Xu J."/>
            <person name="Zhou Y."/>
            <person name="Yu Y."/>
            <person name="Zhang B."/>
            <person name="Zhuang S."/>
            <person name="Wei H."/>
            <person name="Liu B."/>
            <person name="Lei M."/>
            <person name="Yu H."/>
            <person name="Li Y."/>
            <person name="Xu H."/>
            <person name="Wei S."/>
            <person name="He X."/>
            <person name="Fang L."/>
            <person name="Zhang Z."/>
            <person name="Zhang Y."/>
            <person name="Huang X."/>
            <person name="Su Z."/>
            <person name="Tong W."/>
            <person name="Li J."/>
            <person name="Tong Z."/>
            <person name="Li S."/>
            <person name="Ye J."/>
            <person name="Wang L."/>
            <person name="Fang L."/>
            <person name="Lei T."/>
            <person name="Chen C.-S."/>
            <person name="Chen H.-C."/>
            <person name="Xu Z."/>
            <person name="Li H."/>
            <person name="Huang H."/>
            <person name="Zhang F."/>
            <person name="Xu H."/>
            <person name="Li N."/>
            <person name="Zhao C."/>
            <person name="Li S."/>
            <person name="Dong L."/>
            <person name="Huang Y."/>
            <person name="Li L."/>
            <person name="Xi Y."/>
            <person name="Qi Q."/>
            <person name="Li W."/>
            <person name="Zhang B."/>
            <person name="Hu W."/>
            <person name="Zhang Y."/>
            <person name="Tian X."/>
            <person name="Jiao Y."/>
            <person name="Liang X."/>
            <person name="Jin J."/>
            <person name="Gao L."/>
            <person name="Zheng W."/>
            <person name="Hao B."/>
            <person name="Liu S.-M."/>
            <person name="Wang W."/>
            <person name="Yuan L."/>
            <person name="Cao M."/>
            <person name="McDermott J."/>
            <person name="Samudrala R."/>
            <person name="Wang J."/>
            <person name="Wong G.K.-S."/>
            <person name="Yang H."/>
        </authorList>
    </citation>
    <scope>NUCLEOTIDE SEQUENCE [LARGE SCALE GENOMIC DNA]</scope>
    <source>
        <strain>cv. Nipponbare</strain>
    </source>
</reference>
<reference key="5">
    <citation type="journal article" date="2003" name="Science">
        <title>Collection, mapping, and annotation of over 28,000 cDNA clones from japonica rice.</title>
        <authorList>
            <consortium name="The rice full-length cDNA consortium"/>
        </authorList>
    </citation>
    <scope>NUCLEOTIDE SEQUENCE [LARGE SCALE MRNA]</scope>
    <source>
        <strain>cv. Nipponbare</strain>
    </source>
</reference>
<reference key="6">
    <citation type="journal article" date="2005" name="Plant Physiol.">
        <title>Annotations and functional analyses of the rice WRKY gene superfamily reveal positive and negative regulators of abscisic acid signaling in aleurone cells.</title>
        <authorList>
            <person name="Xie Z."/>
            <person name="Zhang Z.-L."/>
            <person name="Zou X."/>
            <person name="Huang J."/>
            <person name="Ruas P."/>
            <person name="Thompson D."/>
            <person name="Shen Q.J."/>
        </authorList>
    </citation>
    <scope>GENE FAMILY</scope>
    <scope>NOMENCLATURE</scope>
</reference>
<reference key="7">
    <citation type="journal article" date="2006" name="Plant Cell Rep.">
        <title>A comprehensive expression analysis of the WRKY gene superfamily in rice plants during defense response.</title>
        <authorList>
            <person name="Ryu H.-S."/>
            <person name="Han M."/>
            <person name="Lee S.-K."/>
            <person name="Cho J.-I."/>
            <person name="Ryoo N."/>
            <person name="Heu S."/>
            <person name="Lee Y.-H."/>
            <person name="Bhoo S.H."/>
            <person name="Wang G.-L."/>
            <person name="Hahn T.-R."/>
            <person name="Jeon J.-S."/>
        </authorList>
    </citation>
    <scope>INDUCTION BY MAGNAPORTHE GRISEA AND XANTHOMONAS ORYZAE</scope>
</reference>
<reference key="8">
    <citation type="journal article" date="2007" name="Plant Cell">
        <title>Rice WRKY45 plays a crucial role in benzothiadiazole-inducible blast resistance.</title>
        <authorList>
            <person name="Shimono M."/>
            <person name="Sugano S."/>
            <person name="Nakayama A."/>
            <person name="Jiang C.-J."/>
            <person name="Ono K."/>
            <person name="Toki S."/>
            <person name="Takatsuji H."/>
        </authorList>
    </citation>
    <scope>INDUCTION BY BTH AND SALICYLIC ACID</scope>
</reference>
<reference key="9">
    <citation type="journal article" date="2010" name="Rice">
        <title>OsWRKY IIa transcription factors modulate rice innate immunity.</title>
        <authorList>
            <person name="Peng Y."/>
            <person name="Bartley L.E."/>
            <person name="Canlas P."/>
            <person name="Ronald P.C."/>
        </authorList>
    </citation>
    <scope>FUNCTION</scope>
</reference>
<reference key="10">
    <citation type="journal article" date="2013" name="Plant Mol. Biol.">
        <title>OsWRKY28, a PAMP-responsive transrepressor, negatively regulates innate immune responses in rice against rice blast fungus.</title>
        <authorList>
            <person name="Chujo T."/>
            <person name="Miyamoto K."/>
            <person name="Shimogawa T."/>
            <person name="Shimizu T."/>
            <person name="Otake Y."/>
            <person name="Yokotani N."/>
            <person name="Nishizawa Y."/>
            <person name="Shibuya N."/>
            <person name="Nojiri H."/>
            <person name="Yamane H."/>
            <person name="Minami E."/>
            <person name="Okada K."/>
        </authorList>
    </citation>
    <scope>INDUCTION BY BIOTIC ELICITORS</scope>
    <source>
        <strain>cv. Nipponbare</strain>
    </source>
</reference>
<organism>
    <name type="scientific">Oryza sativa subsp. japonica</name>
    <name type="common">Rice</name>
    <dbReference type="NCBI Taxonomy" id="39947"/>
    <lineage>
        <taxon>Eukaryota</taxon>
        <taxon>Viridiplantae</taxon>
        <taxon>Streptophyta</taxon>
        <taxon>Embryophyta</taxon>
        <taxon>Tracheophyta</taxon>
        <taxon>Spermatophyta</taxon>
        <taxon>Magnoliopsida</taxon>
        <taxon>Liliopsida</taxon>
        <taxon>Poales</taxon>
        <taxon>Poaceae</taxon>
        <taxon>BOP clade</taxon>
        <taxon>Oryzoideae</taxon>
        <taxon>Oryzeae</taxon>
        <taxon>Oryzinae</taxon>
        <taxon>Oryza</taxon>
        <taxon>Oryza sativa</taxon>
    </lineage>
</organism>
<proteinExistence type="evidence at transcript level"/>
<sequence>MDAAWRGGVGCSPVCLDLCVGLSPVREPSAARHELLDRPAGCRGGGDSKSMTNDEAKIVEAKVTQMSEENRRLTEVIARLYGGQIPRLGLDGSASPPRPVSPLSGKKRSRESMETANSCDANSNRHQGGDADHAESFAADDGTCRRIKVSRVCRRIDPSDTSLVVKDGYQWRKYGQKVTRDNPSPRAYFRCAFAPSCPVKKKVQRSAEDSSLLVATYEGEHNHPHPSPRAGELPAAAGGAGGSLPCSISINSSGPTITLDLTKNGGAVQVVEAAHPPPPPDLKEVCREVASPEFRTALVEQMASALTSDPKFTGALAAAILQKLPEF</sequence>
<evidence type="ECO:0000250" key="1">
    <source>
        <dbReference type="UniProtKB" id="Q6QHD1"/>
    </source>
</evidence>
<evidence type="ECO:0000255" key="2"/>
<evidence type="ECO:0000255" key="3">
    <source>
        <dbReference type="PROSITE-ProRule" id="PRU00223"/>
    </source>
</evidence>
<evidence type="ECO:0000256" key="4">
    <source>
        <dbReference type="SAM" id="MobiDB-lite"/>
    </source>
</evidence>
<evidence type="ECO:0000269" key="5">
    <source>
    </source>
</evidence>
<evidence type="ECO:0000269" key="6">
    <source>
    </source>
</evidence>
<evidence type="ECO:0000269" key="7">
    <source>
    </source>
</evidence>
<evidence type="ECO:0000269" key="8">
    <source>
    </source>
</evidence>
<evidence type="ECO:0000303" key="9">
    <source>
    </source>
</evidence>
<evidence type="ECO:0000305" key="10"/>
<evidence type="ECO:0000312" key="11">
    <source>
        <dbReference type="EMBL" id="BAD29278.1"/>
    </source>
</evidence>
<evidence type="ECO:0000312" key="12">
    <source>
        <dbReference type="EMBL" id="BAF25098.1"/>
    </source>
</evidence>
<evidence type="ECO:0000312" key="13">
    <source>
        <dbReference type="EMBL" id="BAT08099.1"/>
    </source>
</evidence>
<evidence type="ECO:0000312" key="14">
    <source>
        <dbReference type="EMBL" id="EAZ44747.1"/>
    </source>
</evidence>
<dbReference type="EMBL" id="AP005784">
    <property type="protein sequence ID" value="BAD29278.1"/>
    <property type="molecule type" value="Genomic_DNA"/>
</dbReference>
<dbReference type="EMBL" id="AP008215">
    <property type="protein sequence ID" value="BAF25098.1"/>
    <property type="molecule type" value="Genomic_DNA"/>
</dbReference>
<dbReference type="EMBL" id="AP014965">
    <property type="protein sequence ID" value="BAT08099.1"/>
    <property type="molecule type" value="Genomic_DNA"/>
</dbReference>
<dbReference type="EMBL" id="CM000146">
    <property type="protein sequence ID" value="EAZ44747.1"/>
    <property type="molecule type" value="Genomic_DNA"/>
</dbReference>
<dbReference type="EMBL" id="AK059966">
    <property type="protein sequence ID" value="BAG87246.1"/>
    <property type="molecule type" value="mRNA"/>
</dbReference>
<dbReference type="EMBL" id="AK068337">
    <property type="protein sequence ID" value="BAG90866.1"/>
    <property type="molecule type" value="mRNA"/>
</dbReference>
<dbReference type="RefSeq" id="XP_015610695.1">
    <property type="nucleotide sequence ID" value="XM_015755209.1"/>
</dbReference>
<dbReference type="SMR" id="Q6EPZ2"/>
<dbReference type="FunCoup" id="Q6EPZ2">
    <property type="interactions" value="691"/>
</dbReference>
<dbReference type="STRING" id="39947.Q6EPZ2"/>
<dbReference type="PaxDb" id="39947-Q6EPZ2"/>
<dbReference type="EnsemblPlants" id="Os09t0417600-01">
    <property type="protein sequence ID" value="Os09t0417600-01"/>
    <property type="gene ID" value="Os09g0417600"/>
</dbReference>
<dbReference type="EnsemblPlants" id="Os09t0417600-02">
    <property type="protein sequence ID" value="Os09t0417600-02"/>
    <property type="gene ID" value="Os09g0417600"/>
</dbReference>
<dbReference type="Gramene" id="Os09t0417600-01">
    <property type="protein sequence ID" value="Os09t0417600-01"/>
    <property type="gene ID" value="Os09g0417600"/>
</dbReference>
<dbReference type="Gramene" id="Os09t0417600-02">
    <property type="protein sequence ID" value="Os09t0417600-02"/>
    <property type="gene ID" value="Os09g0417600"/>
</dbReference>
<dbReference type="KEGG" id="dosa:Os09g0417600"/>
<dbReference type="eggNOG" id="ENOG502QR7M">
    <property type="taxonomic scope" value="Eukaryota"/>
</dbReference>
<dbReference type="HOGENOM" id="CLU_047067_0_1_1"/>
<dbReference type="InParanoid" id="Q6EPZ2"/>
<dbReference type="OMA" id="ANSCDAN"/>
<dbReference type="OrthoDB" id="1879341at2759"/>
<dbReference type="PlantReactome" id="R-OSA-6788019">
    <property type="pathway name" value="Salicylic acid signaling"/>
</dbReference>
<dbReference type="Proteomes" id="UP000000763">
    <property type="component" value="Chromosome 9"/>
</dbReference>
<dbReference type="Proteomes" id="UP000007752">
    <property type="component" value="Chromosome 9"/>
</dbReference>
<dbReference type="Proteomes" id="UP000059680">
    <property type="component" value="Chromosome 9"/>
</dbReference>
<dbReference type="GO" id="GO:0005634">
    <property type="term" value="C:nucleus"/>
    <property type="evidence" value="ECO:0007669"/>
    <property type="project" value="UniProtKB-SubCell"/>
</dbReference>
<dbReference type="GO" id="GO:0003700">
    <property type="term" value="F:DNA-binding transcription factor activity"/>
    <property type="evidence" value="ECO:0007669"/>
    <property type="project" value="InterPro"/>
</dbReference>
<dbReference type="GO" id="GO:0043565">
    <property type="term" value="F:sequence-specific DNA binding"/>
    <property type="evidence" value="ECO:0007669"/>
    <property type="project" value="InterPro"/>
</dbReference>
<dbReference type="GO" id="GO:0009617">
    <property type="term" value="P:response to bacterium"/>
    <property type="evidence" value="ECO:0000270"/>
    <property type="project" value="UniProtKB"/>
</dbReference>
<dbReference type="GO" id="GO:0010200">
    <property type="term" value="P:response to chitin"/>
    <property type="evidence" value="ECO:0000270"/>
    <property type="project" value="UniProtKB"/>
</dbReference>
<dbReference type="GO" id="GO:0009620">
    <property type="term" value="P:response to fungus"/>
    <property type="evidence" value="ECO:0000270"/>
    <property type="project" value="UniProtKB"/>
</dbReference>
<dbReference type="GO" id="GO:0009751">
    <property type="term" value="P:response to salicylic acid"/>
    <property type="evidence" value="ECO:0000270"/>
    <property type="project" value="UniProtKB"/>
</dbReference>
<dbReference type="FunFam" id="2.20.25.80:FF:000008">
    <property type="entry name" value="WRKY transcription factor 40"/>
    <property type="match status" value="1"/>
</dbReference>
<dbReference type="Gene3D" id="2.20.25.80">
    <property type="entry name" value="WRKY domain"/>
    <property type="match status" value="1"/>
</dbReference>
<dbReference type="InterPro" id="IPR003657">
    <property type="entry name" value="WRKY_dom"/>
</dbReference>
<dbReference type="InterPro" id="IPR036576">
    <property type="entry name" value="WRKY_dom_sf"/>
</dbReference>
<dbReference type="InterPro" id="IPR044810">
    <property type="entry name" value="WRKY_plant"/>
</dbReference>
<dbReference type="PANTHER" id="PTHR31429">
    <property type="entry name" value="WRKY TRANSCRIPTION FACTOR 36-RELATED"/>
    <property type="match status" value="1"/>
</dbReference>
<dbReference type="PANTHER" id="PTHR31429:SF3">
    <property type="entry name" value="WRKY TRANSCRIPTION FACTOR 40-RELATED"/>
    <property type="match status" value="1"/>
</dbReference>
<dbReference type="Pfam" id="PF03106">
    <property type="entry name" value="WRKY"/>
    <property type="match status" value="1"/>
</dbReference>
<dbReference type="SMART" id="SM00774">
    <property type="entry name" value="WRKY"/>
    <property type="match status" value="1"/>
</dbReference>
<dbReference type="SUPFAM" id="SSF118290">
    <property type="entry name" value="WRKY DNA-binding domain"/>
    <property type="match status" value="1"/>
</dbReference>
<dbReference type="PROSITE" id="PS50811">
    <property type="entry name" value="WRKY"/>
    <property type="match status" value="1"/>
</dbReference>
<comment type="function">
    <text evidence="1 7">Transcription repressor. Interacts specifically with the W box (5'-(T)TGAC[CT]-3'), a frequently occurring elicitor-responsive cis-acting element. Regulates, probably indirectly, the activation of defense-related genes during defense response (By similarity). Modulates plant innate immunity against X.oryzae pv. oryzae (Xoo) (PubMed:21961049).</text>
</comment>
<comment type="subcellular location">
    <subcellularLocation>
        <location evidence="1 3">Nucleus</location>
    </subcellularLocation>
</comment>
<comment type="induction">
    <text evidence="5 6 8">Induced by biotic elicitors (e.g. fungal chitin oligosaccharide) (PubMed:23462973). Induced by pathogen infection (e.g. M.grisea and X.oryzae pv. oryzae (Xoo)) (PubMed:16528562). Accumulates after treatment with benzothiadiazole (BTH) and salicylic acid (SA) (PubMed:17601827).</text>
</comment>
<comment type="domain">
    <text evidence="1">The WRKY domain is required to bind DNA.</text>
</comment>
<comment type="similarity">
    <text evidence="10">Belongs to the WRKY group II-a family.</text>
</comment>
<keyword id="KW-0175">Coiled coil</keyword>
<keyword id="KW-0238">DNA-binding</keyword>
<keyword id="KW-0539">Nucleus</keyword>
<keyword id="KW-1185">Reference proteome</keyword>
<keyword id="KW-0804">Transcription</keyword>
<keyword id="KW-0805">Transcription regulation</keyword>
<feature type="chain" id="PRO_0000436960" description="WRKY transcription factor WRKY76">
    <location>
        <begin position="1"/>
        <end position="327"/>
    </location>
</feature>
<feature type="DNA-binding region" description="WRKY" evidence="3">
    <location>
        <begin position="160"/>
        <end position="226"/>
    </location>
</feature>
<feature type="region of interest" description="Disordered" evidence="4">
    <location>
        <begin position="87"/>
        <end position="135"/>
    </location>
</feature>
<feature type="coiled-coil region" evidence="2">
    <location>
        <begin position="56"/>
        <end position="76"/>
    </location>
</feature>
<feature type="short sequence motif" description="Nuclear localization signal" evidence="2">
    <location>
        <begin position="106"/>
        <end position="112"/>
    </location>
</feature>
<feature type="compositionally biased region" description="Polar residues" evidence="4">
    <location>
        <begin position="114"/>
        <end position="126"/>
    </location>
</feature>
<name>WRK76_ORYSJ</name>
<accession>Q6EPZ2</accession>
<gene>
    <name evidence="9" type="primary">WRKY76</name>
    <name evidence="12" type="ordered locus">Os09g0417600</name>
    <name evidence="14" type="ORF">OsJ_29378</name>
    <name evidence="13" type="ORF">OSNPB_090417600</name>
    <name evidence="11" type="ORF">P0014G10.39</name>
</gene>